<protein>
    <recommendedName>
        <fullName>Nucleoporin NUP57</fullName>
    </recommendedName>
    <alternativeName>
        <fullName>Nuclear pore protein NUP57</fullName>
    </alternativeName>
</protein>
<evidence type="ECO:0000255" key="1"/>
<evidence type="ECO:0000256" key="2">
    <source>
        <dbReference type="SAM" id="MobiDB-lite"/>
    </source>
</evidence>
<evidence type="ECO:0000269" key="3">
    <source>
    </source>
</evidence>
<evidence type="ECO:0000269" key="4">
    <source>
    </source>
</evidence>
<evidence type="ECO:0000269" key="5">
    <source>
    </source>
</evidence>
<evidence type="ECO:0000269" key="6">
    <source>
    </source>
</evidence>
<evidence type="ECO:0000269" key="7">
    <source>
    </source>
</evidence>
<evidence type="ECO:0000269" key="8">
    <source>
    </source>
</evidence>
<evidence type="ECO:0000269" key="9">
    <source>
    </source>
</evidence>
<evidence type="ECO:0000269" key="10">
    <source>
    </source>
</evidence>
<evidence type="ECO:0000305" key="11"/>
<proteinExistence type="evidence at protein level"/>
<organism>
    <name type="scientific">Saccharomyces cerevisiae (strain ATCC 204508 / S288c)</name>
    <name type="common">Baker's yeast</name>
    <dbReference type="NCBI Taxonomy" id="559292"/>
    <lineage>
        <taxon>Eukaryota</taxon>
        <taxon>Fungi</taxon>
        <taxon>Dikarya</taxon>
        <taxon>Ascomycota</taxon>
        <taxon>Saccharomycotina</taxon>
        <taxon>Saccharomycetes</taxon>
        <taxon>Saccharomycetales</taxon>
        <taxon>Saccharomycetaceae</taxon>
        <taxon>Saccharomyces</taxon>
    </lineage>
</organism>
<gene>
    <name type="primary">NUP57</name>
    <name type="ordered locus">YGR119C</name>
    <name type="ORF">G6320</name>
</gene>
<feature type="chain" id="PRO_0000204877" description="Nucleoporin NUP57">
    <location>
        <begin position="1"/>
        <end position="541"/>
    </location>
</feature>
<feature type="repeat" description="FG 1">
    <location>
        <begin position="2"/>
        <end position="3"/>
    </location>
</feature>
<feature type="repeat" description="FG 2">
    <location>
        <begin position="11"/>
        <end position="12"/>
    </location>
</feature>
<feature type="repeat" description="FXFG 1">
    <location>
        <begin position="21"/>
        <end position="24"/>
    </location>
</feature>
<feature type="repeat" description="FXFG 2">
    <location>
        <begin position="39"/>
        <end position="42"/>
    </location>
</feature>
<feature type="repeat" description="FG 3">
    <location>
        <begin position="56"/>
        <end position="57"/>
    </location>
</feature>
<feature type="repeat" description="FG 4">
    <location>
        <begin position="65"/>
        <end position="66"/>
    </location>
</feature>
<feature type="repeat" description="GLFG 1">
    <location>
        <begin position="76"/>
        <end position="79"/>
    </location>
</feature>
<feature type="repeat" description="GLFG 2">
    <location>
        <begin position="103"/>
        <end position="106"/>
    </location>
</feature>
<feature type="repeat" description="GLFG 3">
    <location>
        <begin position="120"/>
        <end position="123"/>
    </location>
</feature>
<feature type="repeat" description="GLFG 4">
    <location>
        <begin position="132"/>
        <end position="135"/>
    </location>
</feature>
<feature type="repeat" description="GLFG 5">
    <location>
        <begin position="147"/>
        <end position="150"/>
    </location>
</feature>
<feature type="repeat" description="GLFG 6">
    <location>
        <begin position="175"/>
        <end position="178"/>
    </location>
</feature>
<feature type="repeat" description="GLFG 7">
    <location>
        <begin position="190"/>
        <end position="193"/>
    </location>
</feature>
<feature type="repeat" description="GLFG 8">
    <location>
        <begin position="204"/>
        <end position="207"/>
    </location>
</feature>
<feature type="repeat" description="GLFG 9">
    <location>
        <begin position="220"/>
        <end position="223"/>
    </location>
</feature>
<feature type="region of interest" description="Disordered" evidence="2">
    <location>
        <begin position="1"/>
        <end position="261"/>
    </location>
</feature>
<feature type="coiled-coil region" evidence="1">
    <location>
        <begin position="398"/>
        <end position="425"/>
    </location>
</feature>
<feature type="compositionally biased region" description="Low complexity" evidence="2">
    <location>
        <begin position="1"/>
        <end position="13"/>
    </location>
</feature>
<feature type="compositionally biased region" description="Polar residues" evidence="2">
    <location>
        <begin position="19"/>
        <end position="36"/>
    </location>
</feature>
<feature type="compositionally biased region" description="Polar residues" evidence="2">
    <location>
        <begin position="58"/>
        <end position="72"/>
    </location>
</feature>
<feature type="compositionally biased region" description="Low complexity" evidence="2">
    <location>
        <begin position="83"/>
        <end position="102"/>
    </location>
</feature>
<feature type="compositionally biased region" description="Polar residues" evidence="2">
    <location>
        <begin position="105"/>
        <end position="116"/>
    </location>
</feature>
<feature type="compositionally biased region" description="Polar residues" evidence="2">
    <location>
        <begin position="125"/>
        <end position="146"/>
    </location>
</feature>
<feature type="compositionally biased region" description="Polar residues" evidence="2">
    <location>
        <begin position="153"/>
        <end position="172"/>
    </location>
</feature>
<feature type="compositionally biased region" description="Polar residues" evidence="2">
    <location>
        <begin position="228"/>
        <end position="257"/>
    </location>
</feature>
<dbReference type="EMBL" id="X81155">
    <property type="protein sequence ID" value="CAA57053.1"/>
    <property type="molecule type" value="Genomic_DNA"/>
</dbReference>
<dbReference type="EMBL" id="X83099">
    <property type="protein sequence ID" value="CAA58153.1"/>
    <property type="molecule type" value="Genomic_DNA"/>
</dbReference>
<dbReference type="EMBL" id="AY723815">
    <property type="protein sequence ID" value="AAU09732.1"/>
    <property type="molecule type" value="Genomic_DNA"/>
</dbReference>
<dbReference type="EMBL" id="Z72904">
    <property type="protein sequence ID" value="CAA97129.1"/>
    <property type="molecule type" value="Genomic_DNA"/>
</dbReference>
<dbReference type="EMBL" id="Z72905">
    <property type="protein sequence ID" value="CAA97131.1"/>
    <property type="molecule type" value="Genomic_DNA"/>
</dbReference>
<dbReference type="EMBL" id="BK006941">
    <property type="protein sequence ID" value="DAA08211.1"/>
    <property type="molecule type" value="Genomic_DNA"/>
</dbReference>
<dbReference type="PIR" id="S51799">
    <property type="entry name" value="S51799"/>
</dbReference>
<dbReference type="RefSeq" id="NP_011634.1">
    <property type="nucleotide sequence ID" value="NM_001181248.1"/>
</dbReference>
<dbReference type="PDB" id="7N85">
    <property type="method" value="EM"/>
    <property type="resolution" value="7.60 A"/>
    <property type="chains" value="B/E/H/K=1-541"/>
</dbReference>
<dbReference type="PDB" id="7N9F">
    <property type="method" value="EM"/>
    <property type="resolution" value="37.00 A"/>
    <property type="chains" value="B/E/H/K=1-541"/>
</dbReference>
<dbReference type="PDB" id="7WOO">
    <property type="method" value="EM"/>
    <property type="resolution" value="3.71 A"/>
    <property type="chains" value="H/K=1-541"/>
</dbReference>
<dbReference type="PDB" id="7WOT">
    <property type="method" value="EM"/>
    <property type="resolution" value="3.73 A"/>
    <property type="chains" value="H/K/T/W=1-541"/>
</dbReference>
<dbReference type="PDB" id="8TJ5">
    <property type="method" value="EM"/>
    <property type="resolution" value="6.60 A"/>
    <property type="chains" value="B/E/H/K=1-541"/>
</dbReference>
<dbReference type="PDBsum" id="7N85"/>
<dbReference type="PDBsum" id="7N9F"/>
<dbReference type="PDBsum" id="7WOO"/>
<dbReference type="PDBsum" id="7WOT"/>
<dbReference type="PDBsum" id="8TJ5"/>
<dbReference type="EMDB" id="EMD-24232"/>
<dbReference type="EMDB" id="EMD-24258"/>
<dbReference type="EMDB" id="EMD-32653"/>
<dbReference type="EMDB" id="EMD-32658"/>
<dbReference type="EMDB" id="EMD-41300"/>
<dbReference type="SMR" id="P48837"/>
<dbReference type="BioGRID" id="33364">
    <property type="interactions" value="513"/>
</dbReference>
<dbReference type="ComplexPortal" id="CPX-824">
    <property type="entry name" value="Nuclear pore complex"/>
</dbReference>
<dbReference type="DIP" id="DIP-866N"/>
<dbReference type="FunCoup" id="P48837">
    <property type="interactions" value="338"/>
</dbReference>
<dbReference type="IntAct" id="P48837">
    <property type="interactions" value="34"/>
</dbReference>
<dbReference type="MINT" id="P48837"/>
<dbReference type="STRING" id="4932.YGR119C"/>
<dbReference type="TCDB" id="1.I.1.1.1">
    <property type="family name" value="the nuclear pore complex (npc) family"/>
</dbReference>
<dbReference type="iPTMnet" id="P48837"/>
<dbReference type="PaxDb" id="4932-YGR119C"/>
<dbReference type="PeptideAtlas" id="P48837"/>
<dbReference type="EnsemblFungi" id="YGR119C_mRNA">
    <property type="protein sequence ID" value="YGR119C"/>
    <property type="gene ID" value="YGR119C"/>
</dbReference>
<dbReference type="GeneID" id="853016"/>
<dbReference type="KEGG" id="sce:YGR119C"/>
<dbReference type="AGR" id="SGD:S000003351"/>
<dbReference type="SGD" id="S000003351">
    <property type="gene designation" value="NUP57"/>
</dbReference>
<dbReference type="VEuPathDB" id="FungiDB:YGR119C"/>
<dbReference type="eggNOG" id="KOG3091">
    <property type="taxonomic scope" value="Eukaryota"/>
</dbReference>
<dbReference type="HOGENOM" id="CLU_023804_1_0_1"/>
<dbReference type="InParanoid" id="P48837"/>
<dbReference type="OMA" id="MMQTRLH"/>
<dbReference type="OrthoDB" id="6162375at2759"/>
<dbReference type="BioCyc" id="YEAST:G3O-30826-MONOMER"/>
<dbReference type="Reactome" id="R-SCE-159236">
    <property type="pathway name" value="Transport of Mature mRNA derived from an Intron-Containing Transcript"/>
</dbReference>
<dbReference type="Reactome" id="R-SCE-3371453">
    <property type="pathway name" value="Regulation of HSF1-mediated heat shock response"/>
</dbReference>
<dbReference type="Reactome" id="R-SCE-4085377">
    <property type="pathway name" value="SUMOylation of SUMOylation proteins"/>
</dbReference>
<dbReference type="Reactome" id="R-SCE-4551638">
    <property type="pathway name" value="SUMOylation of chromatin organization proteins"/>
</dbReference>
<dbReference type="Reactome" id="R-SCE-4570464">
    <property type="pathway name" value="SUMOylation of RNA binding proteins"/>
</dbReference>
<dbReference type="BioGRID-ORCS" id="853016">
    <property type="hits" value="9 hits in 10 CRISPR screens"/>
</dbReference>
<dbReference type="CD-CODE" id="691A1FB1">
    <property type="entry name" value="Nuclear pore complex"/>
</dbReference>
<dbReference type="PRO" id="PR:P48837"/>
<dbReference type="Proteomes" id="UP000002311">
    <property type="component" value="Chromosome VII"/>
</dbReference>
<dbReference type="RNAct" id="P48837">
    <property type="molecule type" value="protein"/>
</dbReference>
<dbReference type="GO" id="GO:0005635">
    <property type="term" value="C:nuclear envelope"/>
    <property type="evidence" value="ECO:0000303"/>
    <property type="project" value="ComplexPortal"/>
</dbReference>
<dbReference type="GO" id="GO:0031965">
    <property type="term" value="C:nuclear membrane"/>
    <property type="evidence" value="ECO:0007669"/>
    <property type="project" value="UniProtKB-SubCell"/>
</dbReference>
<dbReference type="GO" id="GO:0005643">
    <property type="term" value="C:nuclear pore"/>
    <property type="evidence" value="ECO:0000314"/>
    <property type="project" value="SGD"/>
</dbReference>
<dbReference type="GO" id="GO:0044613">
    <property type="term" value="C:nuclear pore central transport channel"/>
    <property type="evidence" value="ECO:0000314"/>
    <property type="project" value="SGD"/>
</dbReference>
<dbReference type="GO" id="GO:0042802">
    <property type="term" value="F:identical protein binding"/>
    <property type="evidence" value="ECO:0000353"/>
    <property type="project" value="IntAct"/>
</dbReference>
<dbReference type="GO" id="GO:0017056">
    <property type="term" value="F:structural constituent of nuclear pore"/>
    <property type="evidence" value="ECO:0000314"/>
    <property type="project" value="SGD"/>
</dbReference>
<dbReference type="GO" id="GO:0051028">
    <property type="term" value="P:mRNA transport"/>
    <property type="evidence" value="ECO:0007669"/>
    <property type="project" value="UniProtKB-KW"/>
</dbReference>
<dbReference type="GO" id="GO:0006607">
    <property type="term" value="P:NLS-bearing protein import into nucleus"/>
    <property type="evidence" value="ECO:0000316"/>
    <property type="project" value="SGD"/>
</dbReference>
<dbReference type="GO" id="GO:0006999">
    <property type="term" value="P:nuclear pore organization"/>
    <property type="evidence" value="ECO:0000315"/>
    <property type="project" value="SGD"/>
</dbReference>
<dbReference type="GO" id="GO:0006913">
    <property type="term" value="P:nucleocytoplasmic transport"/>
    <property type="evidence" value="ECO:0000303"/>
    <property type="project" value="ComplexPortal"/>
</dbReference>
<dbReference type="GO" id="GO:0006606">
    <property type="term" value="P:protein import into nucleus"/>
    <property type="evidence" value="ECO:0000315"/>
    <property type="project" value="SGD"/>
</dbReference>
<dbReference type="GO" id="GO:0036228">
    <property type="term" value="P:protein localization to nuclear inner membrane"/>
    <property type="evidence" value="ECO:0000316"/>
    <property type="project" value="SGD"/>
</dbReference>
<dbReference type="InterPro" id="IPR025574">
    <property type="entry name" value="Nucleoporin_FG_rpt"/>
</dbReference>
<dbReference type="InterPro" id="IPR024864">
    <property type="entry name" value="Nup54/Nup57/Nup44"/>
</dbReference>
<dbReference type="InterPro" id="IPR025712">
    <property type="entry name" value="Nup54_alpha-helical_dom"/>
</dbReference>
<dbReference type="PANTHER" id="PTHR13000">
    <property type="entry name" value="NUCLEOPORIN P54"/>
    <property type="match status" value="1"/>
</dbReference>
<dbReference type="PANTHER" id="PTHR13000:SF0">
    <property type="entry name" value="NUCLEOPORIN P54"/>
    <property type="match status" value="1"/>
</dbReference>
<dbReference type="Pfam" id="PF13634">
    <property type="entry name" value="Nucleoporin_FG"/>
    <property type="match status" value="2"/>
</dbReference>
<dbReference type="Pfam" id="PF13874">
    <property type="entry name" value="Nup54"/>
    <property type="match status" value="1"/>
</dbReference>
<comment type="function">
    <text evidence="3 4 5 6 8 9 10">Functions as a component of the nuclear pore complex (NPC). NPC components, collectively referred to as nucleoporins (NUPs), can play the role of both NPC structural components and of docking or interaction partners for transiently associated nuclear transport factors. Active directional transport is assured by both, a Phe-Gly (FG) repeat affinity gradient for these transport factors across the NPC and a transport cofactor concentration gradient across the nuclear envelope (GSP1 and GSP2 GTPases associated predominantly with GTP in the nucleus, with GDP in the cytoplasm). NUP57 plays an important role in several nuclear transport pathways including poly(A)+ RNA, tRNA, and pre-ribosome transport.</text>
</comment>
<comment type="subunit">
    <text evidence="3">Component of the nuclear pore complex (NPC). NPC constitutes the exclusive means of nucleocytoplasmic transport. NPCs allow the passive diffusion of ions and small molecules and the active, nuclear transport receptor-mediated bidirectional transport of macromolecules such as proteins, RNAs, ribonucleoparticles (RNPs), and ribosomal subunits across the nuclear envelope. Due to its 8-fold rotational symmetry, all subunits are present with 8 copies or multiples thereof. NUP57 is part of the NUP57 subcomplex (NIC96, NSP1, NUP49, NUP57) interacting with NUP49 and NSP1. Interacts through its FG repeats with karyopherins.</text>
</comment>
<comment type="interaction">
    <interactant intactId="EBI-12324">
        <id>P48837</id>
    </interactant>
    <interactant intactId="EBI-9145">
        <id>Q06142</id>
        <label>KAP95</label>
    </interactant>
    <organismsDiffer>false</organismsDiffer>
    <experiments>2</experiments>
</comment>
<comment type="interaction">
    <interactant intactId="EBI-12324">
        <id>P48837</id>
    </interactant>
    <interactant intactId="EBI-12056">
        <id>P34077</id>
        <label>NIC96</label>
    </interactant>
    <organismsDiffer>false</organismsDiffer>
    <experiments>6</experiments>
</comment>
<comment type="interaction">
    <interactant intactId="EBI-12324">
        <id>P48837</id>
    </interactant>
    <interactant intactId="EBI-12265">
        <id>P14907</id>
        <label>NSP1</label>
    </interactant>
    <organismsDiffer>false</organismsDiffer>
    <experiments>6</experiments>
</comment>
<comment type="interaction">
    <interactant intactId="EBI-12324">
        <id>P48837</id>
    </interactant>
    <interactant intactId="EBI-11698">
        <id>Q02629</id>
        <label>NUP100</label>
    </interactant>
    <organismsDiffer>false</organismsDiffer>
    <experiments>3</experiments>
</comment>
<comment type="interaction">
    <interactant intactId="EBI-12324">
        <id>P48837</id>
    </interactant>
    <interactant intactId="EBI-11703">
        <id>Q02630</id>
        <label>NUP116</label>
    </interactant>
    <organismsDiffer>false</organismsDiffer>
    <experiments>4</experiments>
</comment>
<comment type="interaction">
    <interactant intactId="EBI-12324">
        <id>P48837</id>
    </interactant>
    <interactant intactId="EBI-11730">
        <id>P49687</id>
        <label>NUP145</label>
    </interactant>
    <organismsDiffer>false</organismsDiffer>
    <experiments>2</experiments>
</comment>
<comment type="interaction">
    <interactant intactId="EBI-12324">
        <id>P48837</id>
    </interactant>
    <interactant intactId="EBI-11756">
        <id>P38181</id>
        <label>NUP170</label>
    </interactant>
    <organismsDiffer>false</organismsDiffer>
    <experiments>2</experiments>
</comment>
<comment type="interaction">
    <interactant intactId="EBI-12324">
        <id>P48837</id>
    </interactant>
    <interactant intactId="EBI-12310">
        <id>P49686</id>
        <label>NUP42</label>
    </interactant>
    <organismsDiffer>false</organismsDiffer>
    <experiments>2</experiments>
</comment>
<comment type="interaction">
    <interactant intactId="EBI-12324">
        <id>P48837</id>
    </interactant>
    <interactant intactId="EBI-12315">
        <id>Q02199</id>
        <label>NUP49</label>
    </interactant>
    <organismsDiffer>false</organismsDiffer>
    <experiments>10</experiments>
</comment>
<comment type="interaction">
    <interactant intactId="EBI-12324">
        <id>P48837</id>
    </interactant>
    <interactant intactId="EBI-12324">
        <id>P48837</id>
        <label>NUP57</label>
    </interactant>
    <organismsDiffer>false</organismsDiffer>
    <experiments>3</experiments>
</comment>
<comment type="interaction">
    <interactant intactId="EBI-12324">
        <id>P48837</id>
    </interactant>
    <interactant intactId="EBI-12337">
        <id>P52891</id>
        <label>NUP84</label>
    </interactant>
    <organismsDiffer>false</organismsDiffer>
    <experiments>2</experiments>
</comment>
<comment type="subcellular location">
    <subcellularLocation>
        <location evidence="3">Nucleus</location>
        <location evidence="3">Nuclear pore complex</location>
    </subcellularLocation>
    <subcellularLocation>
        <location>Nucleus membrane</location>
        <topology>Peripheral membrane protein</topology>
        <orientation>Cytoplasmic side</orientation>
    </subcellularLocation>
    <subcellularLocation>
        <location>Nucleus membrane</location>
        <topology>Peripheral membrane protein</topology>
        <orientation>Nucleoplasmic side</orientation>
    </subcellularLocation>
    <text>Symmetric distribution.</text>
</comment>
<comment type="domain">
    <text>Contains FG repeats. FG repeats are interaction sites for karyopherins (importins, exportins) and form probably an affinity gradient, guiding the transport proteins unidirectionally with their cargo through the NPC. FG repeat regions are highly flexible and lack ordered secondary structure. The overall conservation of FG repeats regarding exact sequence, spacing, and repeat unit length is limited. FG repeat types and their physico-chemical environment change across the NPC from the nucleoplasmic to the cytoplasmic side: GLFG repeats are especially abundant in NUPs in the central region (lacking a charged environment but are enriched in Ser, Thr, Gln, and Asn).</text>
</comment>
<comment type="miscellaneous">
    <text evidence="7">Present with 9310 molecules/cell in log phase SD medium.</text>
</comment>
<comment type="similarity">
    <text evidence="11">Belongs to the nucleoporin GLFG family.</text>
</comment>
<reference key="1">
    <citation type="journal article" date="1995" name="EMBO J.">
        <title>Functional interaction of Nic96p with a core nucleoporin complex consisting of Nsp1p, Nup49p and a novel protein Nup57p.</title>
        <authorList>
            <person name="Grandi P."/>
            <person name="Schlaich N.L."/>
            <person name="Tekotte H."/>
            <person name="Hurt E.C."/>
        </authorList>
    </citation>
    <scope>NUCLEOTIDE SEQUENCE [GENOMIC DNA]</scope>
</reference>
<reference key="2">
    <citation type="journal article" date="1997" name="Nature">
        <title>The nucleotide sequence of Saccharomyces cerevisiae chromosome VII.</title>
        <authorList>
            <person name="Tettelin H."/>
            <person name="Agostoni-Carbone M.L."/>
            <person name="Albermann K."/>
            <person name="Albers M."/>
            <person name="Arroyo J."/>
            <person name="Backes U."/>
            <person name="Barreiros T."/>
            <person name="Bertani I."/>
            <person name="Bjourson A.J."/>
            <person name="Brueckner M."/>
            <person name="Bruschi C.V."/>
            <person name="Carignani G."/>
            <person name="Castagnoli L."/>
            <person name="Cerdan E."/>
            <person name="Clemente M.L."/>
            <person name="Coblenz A."/>
            <person name="Coglievina M."/>
            <person name="Coissac E."/>
            <person name="Defoor E."/>
            <person name="Del Bino S."/>
            <person name="Delius H."/>
            <person name="Delneri D."/>
            <person name="de Wergifosse P."/>
            <person name="Dujon B."/>
            <person name="Durand P."/>
            <person name="Entian K.-D."/>
            <person name="Eraso P."/>
            <person name="Escribano V."/>
            <person name="Fabiani L."/>
            <person name="Fartmann B."/>
            <person name="Feroli F."/>
            <person name="Feuermann M."/>
            <person name="Frontali L."/>
            <person name="Garcia-Gonzalez M."/>
            <person name="Garcia-Saez M.I."/>
            <person name="Goffeau A."/>
            <person name="Guerreiro P."/>
            <person name="Hani J."/>
            <person name="Hansen M."/>
            <person name="Hebling U."/>
            <person name="Hernandez K."/>
            <person name="Heumann K."/>
            <person name="Hilger F."/>
            <person name="Hofmann B."/>
            <person name="Indge K.J."/>
            <person name="James C.M."/>
            <person name="Klima R."/>
            <person name="Koetter P."/>
            <person name="Kramer B."/>
            <person name="Kramer W."/>
            <person name="Lauquin G."/>
            <person name="Leuther H."/>
            <person name="Louis E.J."/>
            <person name="Maillier E."/>
            <person name="Marconi A."/>
            <person name="Martegani E."/>
            <person name="Mazon M.J."/>
            <person name="Mazzoni C."/>
            <person name="McReynolds A.D.K."/>
            <person name="Melchioretto P."/>
            <person name="Mewes H.-W."/>
            <person name="Minenkova O."/>
            <person name="Mueller-Auer S."/>
            <person name="Nawrocki A."/>
            <person name="Netter P."/>
            <person name="Neu R."/>
            <person name="Nombela C."/>
            <person name="Oliver S.G."/>
            <person name="Panzeri L."/>
            <person name="Paoluzi S."/>
            <person name="Plevani P."/>
            <person name="Portetelle D."/>
            <person name="Portillo F."/>
            <person name="Potier S."/>
            <person name="Purnelle B."/>
            <person name="Rieger M."/>
            <person name="Riles L."/>
            <person name="Rinaldi T."/>
            <person name="Robben J."/>
            <person name="Rodrigues-Pousada C."/>
            <person name="Rodriguez-Belmonte E."/>
            <person name="Rodriguez-Torres A.M."/>
            <person name="Rose M."/>
            <person name="Ruzzi M."/>
            <person name="Saliola M."/>
            <person name="Sanchez-Perez M."/>
            <person name="Schaefer B."/>
            <person name="Schaefer M."/>
            <person name="Scharfe M."/>
            <person name="Schmidheini T."/>
            <person name="Schreer A."/>
            <person name="Skala J."/>
            <person name="Souciet J.-L."/>
            <person name="Steensma H.Y."/>
            <person name="Talla E."/>
            <person name="Thierry A."/>
            <person name="Vandenbol M."/>
            <person name="van der Aart Q.J.M."/>
            <person name="Van Dyck L."/>
            <person name="Vanoni M."/>
            <person name="Verhasselt P."/>
            <person name="Voet M."/>
            <person name="Volckaert G."/>
            <person name="Wambutt R."/>
            <person name="Watson M.D."/>
            <person name="Weber N."/>
            <person name="Wedler E."/>
            <person name="Wedler H."/>
            <person name="Wipfli P."/>
            <person name="Wolf K."/>
            <person name="Wright L.F."/>
            <person name="Zaccaria P."/>
            <person name="Zimmermann M."/>
            <person name="Zollner A."/>
            <person name="Kleine K."/>
        </authorList>
    </citation>
    <scope>NUCLEOTIDE SEQUENCE [LARGE SCALE GENOMIC DNA]</scope>
    <source>
        <strain>ATCC 204508 / S288c</strain>
    </source>
</reference>
<reference key="3">
    <citation type="journal article" date="2014" name="G3 (Bethesda)">
        <title>The reference genome sequence of Saccharomyces cerevisiae: Then and now.</title>
        <authorList>
            <person name="Engel S.R."/>
            <person name="Dietrich F.S."/>
            <person name="Fisk D.G."/>
            <person name="Binkley G."/>
            <person name="Balakrishnan R."/>
            <person name="Costanzo M.C."/>
            <person name="Dwight S.S."/>
            <person name="Hitz B.C."/>
            <person name="Karra K."/>
            <person name="Nash R.S."/>
            <person name="Weng S."/>
            <person name="Wong E.D."/>
            <person name="Lloyd P."/>
            <person name="Skrzypek M.S."/>
            <person name="Miyasato S.R."/>
            <person name="Simison M."/>
            <person name="Cherry J.M."/>
        </authorList>
    </citation>
    <scope>GENOME REANNOTATION</scope>
    <source>
        <strain>ATCC 204508 / S288c</strain>
    </source>
</reference>
<reference key="4">
    <citation type="journal article" date="2007" name="Genome Res.">
        <title>Approaching a complete repository of sequence-verified protein-encoding clones for Saccharomyces cerevisiae.</title>
        <authorList>
            <person name="Hu Y."/>
            <person name="Rolfs A."/>
            <person name="Bhullar B."/>
            <person name="Murthy T.V.S."/>
            <person name="Zhu C."/>
            <person name="Berger M.F."/>
            <person name="Camargo A.A."/>
            <person name="Kelley F."/>
            <person name="McCarron S."/>
            <person name="Jepson D."/>
            <person name="Richardson A."/>
            <person name="Raphael J."/>
            <person name="Moreira D."/>
            <person name="Taycher E."/>
            <person name="Zuo D."/>
            <person name="Mohr S."/>
            <person name="Kane M.F."/>
            <person name="Williamson J."/>
            <person name="Simpson A.J.G."/>
            <person name="Bulyk M.L."/>
            <person name="Harlow E."/>
            <person name="Marsischky G."/>
            <person name="Kolodner R.D."/>
            <person name="LaBaer J."/>
        </authorList>
    </citation>
    <scope>NUCLEOTIDE SEQUENCE [GENOMIC DNA]</scope>
    <source>
        <strain>ATCC 204508 / S288c</strain>
    </source>
</reference>
<reference key="5">
    <citation type="journal article" date="1997" name="Yeast">
        <title>An 18.3 kb DNA fragment from yeast chromosome VII carries four unknown open reading frames, the gene for an Asn synthase, remnants of Ty and three tRNA genes.</title>
        <authorList>
            <person name="van Dyck L."/>
            <person name="Tettelin H."/>
            <person name="Purnelle B."/>
            <person name="Goffeau A."/>
        </authorList>
    </citation>
    <scope>NUCLEOTIDE SEQUENCE [GENOMIC DNA] OF 1-354</scope>
    <source>
        <strain>ATCC 96604 / S288c / FY1679</strain>
    </source>
</reference>
<reference key="6">
    <citation type="journal article" date="1996" name="Yeast">
        <title>The sequence of a 23.4 kb segment on the right arm of chromosome VII from Saccharomyces cerevisiae reveals CLB6, SPT6, RP28A and NUP57 genes, a Ty3 element and 11 new open reading frames.</title>
        <authorList>
            <person name="Hansen M."/>
            <person name="Albers M."/>
            <person name="Backes U."/>
            <person name="Coblenz A."/>
            <person name="Leuther H."/>
            <person name="Neu R."/>
            <person name="Schreer A."/>
            <person name="Schaefer B."/>
            <person name="Zimmermann M."/>
            <person name="Wolf K."/>
        </authorList>
    </citation>
    <scope>NUCLEOTIDE SEQUENCE [GENOMIC DNA] OF 243-541</scope>
</reference>
<reference key="7">
    <citation type="journal article" date="1997" name="Mol. Biol. Cell">
        <title>In vitro reconstitution of a heterotrimeric nucleoporin complex consisting of recombinant Nsp1p, Nup49p, and Nup57p.</title>
        <authorList>
            <person name="Schlaich N.L."/>
            <person name="Haener M."/>
            <person name="Lustig A."/>
            <person name="Aebi U."/>
            <person name="Hurt E.C."/>
        </authorList>
    </citation>
    <scope>FUNCTION</scope>
    <scope>THE NUP57 SUBCOMPLEX</scope>
</reference>
<reference key="8">
    <citation type="journal article" date="1998" name="Mol. Biol. Cell">
        <title>A novel fluorescence-based genetic strategy identifies mutants of Saccharomyces cerevisiae defective for nuclear pore complex assembly.</title>
        <authorList>
            <person name="Bucci M."/>
            <person name="Wente S.R."/>
        </authorList>
    </citation>
    <scope>FUNCTION</scope>
    <scope>NPC ASSEMBLY</scope>
</reference>
<reference key="9">
    <citation type="journal article" date="2000" name="J. Cell Biol.">
        <title>The yeast nuclear pore complex: composition, architecture, and transport mechanism.</title>
        <authorList>
            <person name="Rout M.P."/>
            <person name="Aitchison J.D."/>
            <person name="Suprapto A."/>
            <person name="Hjertaas K."/>
            <person name="Zhao Y."/>
            <person name="Chait B.T."/>
        </authorList>
    </citation>
    <scope>FUNCTION</scope>
    <scope>IDENTIFICATION IN THE NUCLEAR PORE COMPLEX</scope>
    <scope>SUBCELLULAR LOCATION</scope>
</reference>
<reference key="10">
    <citation type="journal article" date="2001" name="J. Biol. Chem.">
        <title>Proteomic analysis of nucleoporin interacting proteins.</title>
        <authorList>
            <person name="Allen N.P."/>
            <person name="Huang L."/>
            <person name="Burlingame A."/>
            <person name="Rexach M."/>
        </authorList>
    </citation>
    <scope>FUNCTION</scope>
    <scope>NUCLEOPORIN INTERACTING PROTEINS</scope>
</reference>
<reference key="11">
    <citation type="journal article" date="2001" name="Mol. Cell. Biol.">
        <title>The Nsp1p carboxy-terminal domain is organized into functionally distinct coiled-coil regions required for assembly of nucleoporin subcomplexes and nucleocytoplasmic transport.</title>
        <authorList>
            <person name="Bailer S.M."/>
            <person name="Balduf C."/>
            <person name="Hurt E.C."/>
        </authorList>
    </citation>
    <scope>FUNCTION</scope>
    <scope>NPC ASSEMBLY</scope>
</reference>
<reference key="12">
    <citation type="journal article" date="2003" name="Nature">
        <title>Global analysis of protein expression in yeast.</title>
        <authorList>
            <person name="Ghaemmaghami S."/>
            <person name="Huh W.-K."/>
            <person name="Bower K."/>
            <person name="Howson R.W."/>
            <person name="Belle A."/>
            <person name="Dephoure N."/>
            <person name="O'Shea E.K."/>
            <person name="Weissman J.S."/>
        </authorList>
    </citation>
    <scope>LEVEL OF PROTEIN EXPRESSION [LARGE SCALE ANALYSIS]</scope>
</reference>
<reference key="13">
    <citation type="journal article" date="2003" name="Proc. Natl. Acad. Sci. U.S.A.">
        <title>Disorder in the nuclear pore complex: the FG repeat regions of nucleoporins are natively unfolded.</title>
        <authorList>
            <person name="Denning D.P."/>
            <person name="Patel S.S."/>
            <person name="Uversky V."/>
            <person name="Fink A.L."/>
            <person name="Rexach M."/>
        </authorList>
    </citation>
    <scope>FUNCTION</scope>
    <scope>FG REPEAT STRUCTURE</scope>
</reference>
<reference key="14">
    <citation type="journal article" date="2004" name="Nat. Cell Biol.">
        <title>Minimal nuclear pore complexes define FG repeat domains essential for transport.</title>
        <authorList>
            <person name="Strawn L.A."/>
            <person name="Shen T.X."/>
            <person name="Shulga N."/>
            <person name="Goldfarb D.S."/>
            <person name="Wente S.R."/>
        </authorList>
    </citation>
    <scope>FUNCTION</scope>
    <scope>FG REPEATS IN NPC TRANSPORT</scope>
</reference>
<reference key="15">
    <citation type="journal article" date="2003" name="Dev. Cell">
        <title>Peering through the pore: nuclear pore complex structure, assembly, and function.</title>
        <authorList>
            <person name="Suntharalingam M."/>
            <person name="Wente S.R."/>
        </authorList>
    </citation>
    <scope>REVIEW</scope>
</reference>
<reference key="16">
    <citation type="journal article" date="2008" name="Mol. Cell. Proteomics">
        <title>A multidimensional chromatography technology for in-depth phosphoproteome analysis.</title>
        <authorList>
            <person name="Albuquerque C.P."/>
            <person name="Smolka M.B."/>
            <person name="Payne S.H."/>
            <person name="Bafna V."/>
            <person name="Eng J."/>
            <person name="Zhou H."/>
        </authorList>
    </citation>
    <scope>IDENTIFICATION BY MASS SPECTROMETRY [LARGE SCALE ANALYSIS]</scope>
</reference>
<reference key="17">
    <citation type="journal article" date="2009" name="Science">
        <title>Global analysis of Cdk1 substrate phosphorylation sites provides insights into evolution.</title>
        <authorList>
            <person name="Holt L.J."/>
            <person name="Tuch B.B."/>
            <person name="Villen J."/>
            <person name="Johnson A.D."/>
            <person name="Gygi S.P."/>
            <person name="Morgan D.O."/>
        </authorList>
    </citation>
    <scope>IDENTIFICATION BY MASS SPECTROMETRY [LARGE SCALE ANALYSIS]</scope>
</reference>
<accession>P48837</accession>
<accession>D6VUQ0</accession>
<sequence length="541" mass="57499">MFGFSGSNNGFGNKPAGSTGFSFGQNNNNTNTQPSASGFGFGGSQPNSGTATTGGFGANQATNTFGSNQQSSTGGGLFGNKPALGSLGSSSTTASGTTATGTGLFGQQTAQPQQSTIGGGLFGNKPTTTTGGLFGNSAQNNSTTSGGLFGNKVGSTGSLMGGNSTQNTSNMNAGGLFGAKPQNTTATTGGLFGSKPQGSTTNGGLFGSGTQNNNTLGGGGLFGQSQQPQTNTAPGLGNTVSTQPSFAWSKPSTGSNLQQQQQQQIQVPLQQTQAIAQQQQLSNYPQQIQEQVLKCKESWDPNTTKTKLRAFVYNKVNETEAILYTKPGHVLQEEWDQAMEKKPSPQTIPIQIYGFEGLNQRNQVQTENVAQARIILNHILEKSTQLQQKHELDTASRILKAQSRNVEIEKRILKLGTQLATLKNRGLPLGIAEEKMWSQFQTLLQRSEDPAGLGKTNELWARLAILKERAKNISSQLDSKLMVFNDDTKNQDSMSKGTGEESNDRINKIVEILTNQQRGITYLNEVLEKDAAIVKKYKNKT</sequence>
<keyword id="KW-0002">3D-structure</keyword>
<keyword id="KW-0175">Coiled coil</keyword>
<keyword id="KW-0472">Membrane</keyword>
<keyword id="KW-0509">mRNA transport</keyword>
<keyword id="KW-0906">Nuclear pore complex</keyword>
<keyword id="KW-0539">Nucleus</keyword>
<keyword id="KW-0653">Protein transport</keyword>
<keyword id="KW-1185">Reference proteome</keyword>
<keyword id="KW-0677">Repeat</keyword>
<keyword id="KW-0811">Translocation</keyword>
<keyword id="KW-0813">Transport</keyword>
<name>NUP57_YEAST</name>